<sequence>MTREHFLEGKDIVVAGAGVAGLAFALNLQRQWGDNVPPLRVVVYDRDKREVDLRRQGYSQTLSGIKEDTGLVVLKQLGLLDKVIDGAVMTDAISKFTIWDKDWNASPSFNVPAYGDMPTSAVRIPRRVLRTILIEAAEAAGIEVHWSVSCEDFEYLDDGRVGIRLRNADDGEIIETRACDLLVAADGANSKIRTILRPDDTLQYTGLMMMGGVAEFPHGAVPDHIRDKWGMVLTDQGISCFLSPTSQMGYHWGLSWWEQSPRAPPATWSIEYTQSLKSEALRRSRVIADPFATIVKRTDPSTMFIMAGMDKRPFSHEHLRKVVFIGDSNHAFSPLAGNGANVALKDGYDLAEQLCKASCMDDAISQFDRESVPRALRTLDRSHERIASAHTTQLDRDQFTDGSGANDFLVGQQHSDK</sequence>
<accession>A0A2I2F2J4</accession>
<name>CFOF_ASPCN</name>
<feature type="chain" id="PRO_0000459543" description="Monooxygenase cfoF">
    <location>
        <begin position="1"/>
        <end position="417"/>
    </location>
</feature>
<feature type="region of interest" description="Disordered" evidence="2">
    <location>
        <begin position="389"/>
        <end position="417"/>
    </location>
</feature>
<feature type="compositionally biased region" description="Basic and acidic residues" evidence="2">
    <location>
        <begin position="389"/>
        <end position="399"/>
    </location>
</feature>
<feature type="binding site" evidence="1">
    <location>
        <begin position="45"/>
        <end position="48"/>
    </location>
    <ligand>
        <name>FAD</name>
        <dbReference type="ChEBI" id="CHEBI:57692"/>
    </ligand>
</feature>
<feature type="binding site" evidence="1">
    <location>
        <position position="126"/>
    </location>
    <ligand>
        <name>FAD</name>
        <dbReference type="ChEBI" id="CHEBI:57692"/>
    </ligand>
</feature>
<feature type="binding site" evidence="1">
    <location>
        <position position="327"/>
    </location>
    <ligand>
        <name>FAD</name>
        <dbReference type="ChEBI" id="CHEBI:57692"/>
    </ligand>
</feature>
<reference key="1">
    <citation type="submission" date="2017-12" db="EMBL/GenBank/DDBJ databases">
        <authorList>
            <consortium name="DOE Joint Genome Institute"/>
            <person name="Haridas S."/>
            <person name="Kjaerbolling I."/>
            <person name="Vesth T.C."/>
            <person name="Frisvad J.C."/>
            <person name="Nybo J.L."/>
            <person name="Theobald S."/>
            <person name="Kuo A."/>
            <person name="Bowyer P."/>
            <person name="Matsuda Y."/>
            <person name="Mondo S."/>
            <person name="Lyhne E.K."/>
            <person name="Kogle M.E."/>
            <person name="Clum A."/>
            <person name="Lipzen A."/>
            <person name="Salamov A."/>
            <person name="Ngan C.Y."/>
            <person name="Daum C."/>
            <person name="Chiniquy J."/>
            <person name="Barry K."/>
            <person name="LaButti K."/>
            <person name="Simmons B.A."/>
            <person name="Magnuson J.K."/>
            <person name="Mortensen U.H."/>
            <person name="Larsen T.O."/>
            <person name="Grigoriev I.V."/>
            <person name="Baker S.E."/>
            <person name="Andersen M.R."/>
            <person name="Nordberg H.P."/>
            <person name="Cantor M.N."/>
            <person name="Hua S.X."/>
        </authorList>
    </citation>
    <scope>NUCLEOTIDE SEQUENCE [LARGE SCALE GENOMIC DNA]</scope>
    <source>
        <strain>CBS 102.13</strain>
    </source>
</reference>
<reference key="2">
    <citation type="journal article" date="2023" name="Angew. Chem. Int. Ed.">
        <title>Discovery of a Unique Flavonoid Biosynthesis Mechanism in Fungi by Genome Mining.</title>
        <authorList>
            <person name="Zhang W."/>
            <person name="Zhang X."/>
            <person name="Feng D."/>
            <person name="Liang Y."/>
            <person name="Wu Z."/>
            <person name="Du S."/>
            <person name="Zhou Y."/>
            <person name="Geng C."/>
            <person name="Men P."/>
            <person name="Fu C."/>
            <person name="Huang X."/>
            <person name="Lu X."/>
        </authorList>
    </citation>
    <scope>FUNCTION</scope>
    <scope>DISRUPTION PHENOTYPE</scope>
    <scope>PATHWAY</scope>
</reference>
<evidence type="ECO:0000250" key="1">
    <source>
        <dbReference type="UniProtKB" id="Q84HF5"/>
    </source>
</evidence>
<evidence type="ECO:0000256" key="2">
    <source>
        <dbReference type="SAM" id="MobiDB-lite"/>
    </source>
</evidence>
<evidence type="ECO:0000269" key="3">
    <source>
    </source>
</evidence>
<evidence type="ECO:0000303" key="4">
    <source>
    </source>
</evidence>
<evidence type="ECO:0000305" key="5"/>
<dbReference type="EC" id="1.14.-.-" evidence="3"/>
<dbReference type="EMBL" id="KZ559171">
    <property type="protein sequence ID" value="PLB34865.1"/>
    <property type="molecule type" value="Genomic_DNA"/>
</dbReference>
<dbReference type="SMR" id="A0A2I2F2J4"/>
<dbReference type="STRING" id="41067.A0A2I2F2J4"/>
<dbReference type="OrthoDB" id="655030at2759"/>
<dbReference type="UniPathway" id="UPA00154"/>
<dbReference type="Proteomes" id="UP000234585">
    <property type="component" value="Unassembled WGS sequence"/>
</dbReference>
<dbReference type="GO" id="GO:0071949">
    <property type="term" value="F:FAD binding"/>
    <property type="evidence" value="ECO:0007669"/>
    <property type="project" value="InterPro"/>
</dbReference>
<dbReference type="GO" id="GO:0004497">
    <property type="term" value="F:monooxygenase activity"/>
    <property type="evidence" value="ECO:0007669"/>
    <property type="project" value="UniProtKB-KW"/>
</dbReference>
<dbReference type="GO" id="GO:0009813">
    <property type="term" value="P:flavonoid biosynthetic process"/>
    <property type="evidence" value="ECO:0007669"/>
    <property type="project" value="UniProtKB-UniPathway"/>
</dbReference>
<dbReference type="Gene3D" id="3.50.50.60">
    <property type="entry name" value="FAD/NAD(P)-binding domain"/>
    <property type="match status" value="1"/>
</dbReference>
<dbReference type="InterPro" id="IPR002938">
    <property type="entry name" value="FAD-bd"/>
</dbReference>
<dbReference type="InterPro" id="IPR036188">
    <property type="entry name" value="FAD/NAD-bd_sf"/>
</dbReference>
<dbReference type="PANTHER" id="PTHR46972:SF1">
    <property type="entry name" value="FAD DEPENDENT OXIDOREDUCTASE DOMAIN-CONTAINING PROTEIN"/>
    <property type="match status" value="1"/>
</dbReference>
<dbReference type="PANTHER" id="PTHR46972">
    <property type="entry name" value="MONOOXYGENASE ASQM-RELATED"/>
    <property type="match status" value="1"/>
</dbReference>
<dbReference type="Pfam" id="PF01494">
    <property type="entry name" value="FAD_binding_3"/>
    <property type="match status" value="1"/>
</dbReference>
<dbReference type="PRINTS" id="PR00420">
    <property type="entry name" value="RNGMNOXGNASE"/>
</dbReference>
<dbReference type="SUPFAM" id="SSF51905">
    <property type="entry name" value="FAD/NAD(P)-binding domain"/>
    <property type="match status" value="1"/>
</dbReference>
<keyword id="KW-0274">FAD</keyword>
<keyword id="KW-0284">Flavonoid biosynthesis</keyword>
<keyword id="KW-0285">Flavoprotein</keyword>
<keyword id="KW-0503">Monooxygenase</keyword>
<keyword id="KW-0521">NADP</keyword>
<keyword id="KW-0560">Oxidoreductase</keyword>
<keyword id="KW-1185">Reference proteome</keyword>
<gene>
    <name evidence="4" type="primary">cfoF</name>
    <name type="ORF">BDW47DRAFT_111395</name>
</gene>
<comment type="function">
    <text evidence="3">Monooxygenase; part of the gene cluster that mediates the biosynthesis of chlorflavonin, a fungal flavonoid with acetolactate synthase inhibitory activity (PubMed:36704842). Within the pathway, cfoF is responsible for the hydroxylation of the flavonoid skeleton at position C3 (PubMed:36704842). The pathway begins with the PKS-NRPS hybrid synthetase cfoA that uses benzoic acid or p-hydroxybenzoic acid as a starter unit with four rounds of chain elongation using malonyl-CoA to form the chalcone skeleton. Then, a new type of chalcone isomerase, cfoK, catalyzes the conversion of the chalcone into a flavanone by a histidine-mediated oxa-Michael addition mechanism. The desaturation of flavanone to flavone is catalyzed by a new type of flavone synthase, the flavin mononucleotide (FMN)-dependent oxidoreductase cfoJ. Monooxygenases cfoF, cfoG, and P450 cfoH are responsible for the hydroxylation of the flavonoid skeleton at sites C3, C8, and C2', respectively. Like cfoF, the dehydratase cfoI plays also a role in the hydroxylation of position C3. Methyltransferases cfoB, cfoC, and cfoD then catalyze the methylation of C7-OH, C8-OH, and C3-OH, respectively. Finally, the monooxygenase cfoE is responsible for the chlorination of flavonoid at position C3' (PubMed:36704842).</text>
</comment>
<comment type="cofactor">
    <cofactor evidence="1">
        <name>FAD</name>
        <dbReference type="ChEBI" id="CHEBI:57692"/>
    </cofactor>
</comment>
<comment type="pathway">
    <text evidence="3">Secondary metabolite biosynthesis; flavonoid biosynthesis.</text>
</comment>
<comment type="disruption phenotype">
    <text evidence="3">Impairs the hydroxylation of the flavonoid skeleton at position C3.</text>
</comment>
<comment type="similarity">
    <text evidence="5">Belongs to the aromatic-ring hydroxylase family. KMO subfamily.</text>
</comment>
<proteinExistence type="inferred from homology"/>
<protein>
    <recommendedName>
        <fullName evidence="4">Monooxygenase cfoF</fullName>
        <ecNumber evidence="3">1.14.-.-</ecNumber>
    </recommendedName>
    <alternativeName>
        <fullName evidence="4">Chlorflavonin biosynthesis cluster protein F</fullName>
    </alternativeName>
</protein>
<organism>
    <name type="scientific">Aspergillus candidus</name>
    <dbReference type="NCBI Taxonomy" id="41067"/>
    <lineage>
        <taxon>Eukaryota</taxon>
        <taxon>Fungi</taxon>
        <taxon>Dikarya</taxon>
        <taxon>Ascomycota</taxon>
        <taxon>Pezizomycotina</taxon>
        <taxon>Eurotiomycetes</taxon>
        <taxon>Eurotiomycetidae</taxon>
        <taxon>Eurotiales</taxon>
        <taxon>Aspergillaceae</taxon>
        <taxon>Aspergillus</taxon>
        <taxon>Aspergillus subgen. Circumdati</taxon>
    </lineage>
</organism>